<proteinExistence type="evidence at protein level"/>
<accession>F1MH24</accession>
<evidence type="ECO:0000250" key="1">
    <source>
        <dbReference type="UniProtKB" id="P0C1X8"/>
    </source>
</evidence>
<evidence type="ECO:0000250" key="2">
    <source>
        <dbReference type="UniProtKB" id="P28523"/>
    </source>
</evidence>
<evidence type="ECO:0000250" key="3">
    <source>
        <dbReference type="UniProtKB" id="Q2M2I8"/>
    </source>
</evidence>
<evidence type="ECO:0000250" key="4">
    <source>
        <dbReference type="UniProtKB" id="Q3UHJ0"/>
    </source>
</evidence>
<evidence type="ECO:0000255" key="5">
    <source>
        <dbReference type="PROSITE-ProRule" id="PRU00159"/>
    </source>
</evidence>
<evidence type="ECO:0000255" key="6">
    <source>
        <dbReference type="PROSITE-ProRule" id="PRU10027"/>
    </source>
</evidence>
<evidence type="ECO:0000256" key="7">
    <source>
        <dbReference type="SAM" id="MobiDB-lite"/>
    </source>
</evidence>
<evidence type="ECO:0000269" key="8">
    <source>
    </source>
</evidence>
<evidence type="ECO:0000303" key="9">
    <source>
    </source>
</evidence>
<evidence type="ECO:0000305" key="10"/>
<dbReference type="EC" id="2.7.11.1" evidence="3"/>
<dbReference type="EMBL" id="AAFC03047227">
    <property type="status" value="NOT_ANNOTATED_CDS"/>
    <property type="molecule type" value="Genomic_DNA"/>
</dbReference>
<dbReference type="EMBL" id="AAFC03072429">
    <property type="status" value="NOT_ANNOTATED_CDS"/>
    <property type="molecule type" value="Genomic_DNA"/>
</dbReference>
<dbReference type="SMR" id="F1MH24"/>
<dbReference type="FunCoup" id="F1MH24">
    <property type="interactions" value="1359"/>
</dbReference>
<dbReference type="STRING" id="9913.ENSBTAP00000073269"/>
<dbReference type="iPTMnet" id="F1MH24"/>
<dbReference type="PaxDb" id="9913-ENSBTAP00000012302"/>
<dbReference type="eggNOG" id="KOG1989">
    <property type="taxonomic scope" value="Eukaryota"/>
</dbReference>
<dbReference type="HOGENOM" id="CLU_000288_109_5_1"/>
<dbReference type="InParanoid" id="F1MH24"/>
<dbReference type="OrthoDB" id="2018507at2759"/>
<dbReference type="Proteomes" id="UP000009136">
    <property type="component" value="Unplaced"/>
</dbReference>
<dbReference type="GO" id="GO:0031252">
    <property type="term" value="C:cell leading edge"/>
    <property type="evidence" value="ECO:0000250"/>
    <property type="project" value="UniProtKB"/>
</dbReference>
<dbReference type="GO" id="GO:0005905">
    <property type="term" value="C:clathrin-coated pit"/>
    <property type="evidence" value="ECO:0000314"/>
    <property type="project" value="UniProtKB"/>
</dbReference>
<dbReference type="GO" id="GO:0030136">
    <property type="term" value="C:clathrin-coated vesicle"/>
    <property type="evidence" value="ECO:0000250"/>
    <property type="project" value="UniProtKB"/>
</dbReference>
<dbReference type="GO" id="GO:0005886">
    <property type="term" value="C:plasma membrane"/>
    <property type="evidence" value="ECO:0007669"/>
    <property type="project" value="UniProtKB-SubCell"/>
</dbReference>
<dbReference type="GO" id="GO:0098793">
    <property type="term" value="C:presynapse"/>
    <property type="evidence" value="ECO:0000318"/>
    <property type="project" value="GO_Central"/>
</dbReference>
<dbReference type="GO" id="GO:0043195">
    <property type="term" value="C:terminal bouton"/>
    <property type="evidence" value="ECO:0000250"/>
    <property type="project" value="UniProtKB"/>
</dbReference>
<dbReference type="GO" id="GO:0035612">
    <property type="term" value="F:AP-2 adaptor complex binding"/>
    <property type="evidence" value="ECO:0000250"/>
    <property type="project" value="UniProtKB"/>
</dbReference>
<dbReference type="GO" id="GO:0005524">
    <property type="term" value="F:ATP binding"/>
    <property type="evidence" value="ECO:0007669"/>
    <property type="project" value="UniProtKB-KW"/>
</dbReference>
<dbReference type="GO" id="GO:0005112">
    <property type="term" value="F:Notch binding"/>
    <property type="evidence" value="ECO:0000250"/>
    <property type="project" value="UniProtKB"/>
</dbReference>
<dbReference type="GO" id="GO:0106310">
    <property type="term" value="F:protein serine kinase activity"/>
    <property type="evidence" value="ECO:0007669"/>
    <property type="project" value="RHEA"/>
</dbReference>
<dbReference type="GO" id="GO:0004674">
    <property type="term" value="F:protein serine/threonine kinase activity"/>
    <property type="evidence" value="ECO:0000250"/>
    <property type="project" value="UniProtKB"/>
</dbReference>
<dbReference type="GO" id="GO:0006897">
    <property type="term" value="P:endocytosis"/>
    <property type="evidence" value="ECO:0007669"/>
    <property type="project" value="UniProtKB-KW"/>
</dbReference>
<dbReference type="GO" id="GO:0045747">
    <property type="term" value="P:positive regulation of Notch signaling pathway"/>
    <property type="evidence" value="ECO:0000250"/>
    <property type="project" value="UniProtKB"/>
</dbReference>
<dbReference type="GO" id="GO:0006468">
    <property type="term" value="P:protein phosphorylation"/>
    <property type="evidence" value="ECO:0000250"/>
    <property type="project" value="UniProtKB"/>
</dbReference>
<dbReference type="GO" id="GO:0050821">
    <property type="term" value="P:protein stabilization"/>
    <property type="evidence" value="ECO:0000250"/>
    <property type="project" value="UniProtKB"/>
</dbReference>
<dbReference type="GO" id="GO:2000369">
    <property type="term" value="P:regulation of clathrin-dependent endocytosis"/>
    <property type="evidence" value="ECO:0000250"/>
    <property type="project" value="UniProtKB"/>
</dbReference>
<dbReference type="GO" id="GO:0032880">
    <property type="term" value="P:regulation of protein localization"/>
    <property type="evidence" value="ECO:0000250"/>
    <property type="project" value="UniProtKB"/>
</dbReference>
<dbReference type="CDD" id="cd14037">
    <property type="entry name" value="STKc_NAK_like"/>
    <property type="match status" value="1"/>
</dbReference>
<dbReference type="FunFam" id="1.10.510.10:FF:000072">
    <property type="entry name" value="AP2 associated kinase 1"/>
    <property type="match status" value="1"/>
</dbReference>
<dbReference type="Gene3D" id="1.10.510.10">
    <property type="entry name" value="Transferase(Phosphotransferase) domain 1"/>
    <property type="match status" value="1"/>
</dbReference>
<dbReference type="InterPro" id="IPR051744">
    <property type="entry name" value="AP2_assoc_SerThr_kinase"/>
</dbReference>
<dbReference type="InterPro" id="IPR011009">
    <property type="entry name" value="Kinase-like_dom_sf"/>
</dbReference>
<dbReference type="InterPro" id="IPR000719">
    <property type="entry name" value="Prot_kinase_dom"/>
</dbReference>
<dbReference type="InterPro" id="IPR008271">
    <property type="entry name" value="Ser/Thr_kinase_AS"/>
</dbReference>
<dbReference type="PANTHER" id="PTHR47907:SF3">
    <property type="entry name" value="AP2-ASSOCIATED PROTEIN KINASE 1"/>
    <property type="match status" value="1"/>
</dbReference>
<dbReference type="PANTHER" id="PTHR47907">
    <property type="entry name" value="PROTEIN KINASE DOMAIN-CONTAINING PROTEIN"/>
    <property type="match status" value="1"/>
</dbReference>
<dbReference type="Pfam" id="PF00069">
    <property type="entry name" value="Pkinase"/>
    <property type="match status" value="1"/>
</dbReference>
<dbReference type="SMART" id="SM00220">
    <property type="entry name" value="S_TKc"/>
    <property type="match status" value="1"/>
</dbReference>
<dbReference type="SUPFAM" id="SSF56112">
    <property type="entry name" value="Protein kinase-like (PK-like)"/>
    <property type="match status" value="1"/>
</dbReference>
<dbReference type="PROSITE" id="PS50011">
    <property type="entry name" value="PROTEIN_KINASE_DOM"/>
    <property type="match status" value="1"/>
</dbReference>
<dbReference type="PROSITE" id="PS00108">
    <property type="entry name" value="PROTEIN_KINASE_ST"/>
    <property type="match status" value="1"/>
</dbReference>
<gene>
    <name type="primary">AAK1</name>
</gene>
<name>AAK1_BOVIN</name>
<feature type="chain" id="PRO_0000413361" description="AP2-associated protein kinase 1">
    <location>
        <begin position="1"/>
        <end position="957"/>
    </location>
</feature>
<feature type="domain" description="Protein kinase" evidence="5">
    <location>
        <begin position="46"/>
        <end position="315"/>
    </location>
</feature>
<feature type="region of interest" description="Disordered" evidence="7">
    <location>
        <begin position="1"/>
        <end position="25"/>
    </location>
</feature>
<feature type="region of interest" description="Disordered" evidence="7">
    <location>
        <begin position="326"/>
        <end position="506"/>
    </location>
</feature>
<feature type="region of interest" description="Disordered" evidence="7">
    <location>
        <begin position="563"/>
        <end position="629"/>
    </location>
</feature>
<feature type="region of interest" description="Disordered" evidence="7">
    <location>
        <begin position="660"/>
        <end position="697"/>
    </location>
</feature>
<feature type="region of interest" description="Clathrin-binding domain (CBD)" evidence="3">
    <location>
        <begin position="819"/>
        <end position="956"/>
    </location>
</feature>
<feature type="region of interest" description="Disordered" evidence="7">
    <location>
        <begin position="832"/>
        <end position="855"/>
    </location>
</feature>
<feature type="region of interest" description="Disordered" evidence="7">
    <location>
        <begin position="919"/>
        <end position="941"/>
    </location>
</feature>
<feature type="compositionally biased region" description="Basic and acidic residues" evidence="7">
    <location>
        <begin position="1"/>
        <end position="11"/>
    </location>
</feature>
<feature type="compositionally biased region" description="Gly residues" evidence="7">
    <location>
        <begin position="12"/>
        <end position="25"/>
    </location>
</feature>
<feature type="compositionally biased region" description="Pro residues" evidence="7">
    <location>
        <begin position="436"/>
        <end position="448"/>
    </location>
</feature>
<feature type="compositionally biased region" description="Low complexity" evidence="7">
    <location>
        <begin position="449"/>
        <end position="506"/>
    </location>
</feature>
<feature type="compositionally biased region" description="Low complexity" evidence="7">
    <location>
        <begin position="563"/>
        <end position="601"/>
    </location>
</feature>
<feature type="compositionally biased region" description="Polar residues" evidence="7">
    <location>
        <begin position="607"/>
        <end position="617"/>
    </location>
</feature>
<feature type="compositionally biased region" description="Polar residues" evidence="7">
    <location>
        <begin position="668"/>
        <end position="692"/>
    </location>
</feature>
<feature type="compositionally biased region" description="Polar residues" evidence="7">
    <location>
        <begin position="840"/>
        <end position="855"/>
    </location>
</feature>
<feature type="compositionally biased region" description="Low complexity" evidence="7">
    <location>
        <begin position="927"/>
        <end position="940"/>
    </location>
</feature>
<feature type="active site" description="Proton acceptor" evidence="2 5 6">
    <location>
        <position position="176"/>
    </location>
</feature>
<feature type="binding site" evidence="2 5">
    <location>
        <begin position="52"/>
        <end position="60"/>
    </location>
    <ligand>
        <name>ATP</name>
        <dbReference type="ChEBI" id="CHEBI:30616"/>
    </ligand>
</feature>
<feature type="binding site" evidence="2 5">
    <location>
        <position position="74"/>
    </location>
    <ligand>
        <name>ATP</name>
        <dbReference type="ChEBI" id="CHEBI:30616"/>
    </ligand>
</feature>
<feature type="modified residue" description="N-acetylmethionine" evidence="3">
    <location>
        <position position="1"/>
    </location>
</feature>
<feature type="modified residue" description="Phosphoserine" evidence="3">
    <location>
        <position position="14"/>
    </location>
</feature>
<feature type="modified residue" description="Phosphotyrosine" evidence="3">
    <location>
        <position position="234"/>
    </location>
</feature>
<feature type="modified residue" description="Phosphoserine" evidence="3">
    <location>
        <position position="235"/>
    </location>
</feature>
<feature type="modified residue" description="Phosphothreonine" evidence="3">
    <location>
        <position position="354"/>
    </location>
</feature>
<feature type="modified residue" description="Phosphothreonine" evidence="3">
    <location>
        <position position="389"/>
    </location>
</feature>
<feature type="modified residue" description="Omega-N-methylarginine" evidence="4">
    <location>
        <position position="391"/>
    </location>
</feature>
<feature type="modified residue" description="Phosphothreonine" evidence="3">
    <location>
        <position position="441"/>
    </location>
</feature>
<feature type="modified residue" description="Phosphothreonine" evidence="3">
    <location>
        <position position="602"/>
    </location>
</feature>
<feature type="modified residue" description="Phosphoserine" evidence="1">
    <location>
        <position position="614"/>
    </location>
</feature>
<feature type="modified residue" description="Phosphothreonine" evidence="3">
    <location>
        <position position="616"/>
    </location>
</feature>
<feature type="modified residue" description="Phosphoserine" evidence="3">
    <location>
        <position position="619"/>
    </location>
</feature>
<feature type="modified residue" description="Phosphoserine" evidence="3">
    <location>
        <position position="620"/>
    </location>
</feature>
<feature type="modified residue" description="Phosphoserine" evidence="3">
    <location>
        <position position="633"/>
    </location>
</feature>
<feature type="modified residue" description="Phosphoserine" evidence="3">
    <location>
        <position position="646"/>
    </location>
</feature>
<feature type="modified residue" description="Phosphothreonine" evidence="3">
    <location>
        <position position="649"/>
    </location>
</feature>
<feature type="modified residue" description="Phosphotyrosine" evidence="3">
    <location>
        <position position="683"/>
    </location>
</feature>
<feature type="modified residue" description="Phosphoserine" evidence="3">
    <location>
        <position position="727"/>
    </location>
</feature>
<feature type="modified residue" description="Phosphoserine" evidence="4">
    <location>
        <position position="842"/>
    </location>
</feature>
<feature type="modified residue" description="Phosphoserine" evidence="4">
    <location>
        <position position="933"/>
    </location>
</feature>
<feature type="modified residue" description="Phosphoserine" evidence="4">
    <location>
        <position position="934"/>
    </location>
</feature>
<organism>
    <name type="scientific">Bos taurus</name>
    <name type="common">Bovine</name>
    <dbReference type="NCBI Taxonomy" id="9913"/>
    <lineage>
        <taxon>Eukaryota</taxon>
        <taxon>Metazoa</taxon>
        <taxon>Chordata</taxon>
        <taxon>Craniata</taxon>
        <taxon>Vertebrata</taxon>
        <taxon>Euteleostomi</taxon>
        <taxon>Mammalia</taxon>
        <taxon>Eutheria</taxon>
        <taxon>Laurasiatheria</taxon>
        <taxon>Artiodactyla</taxon>
        <taxon>Ruminantia</taxon>
        <taxon>Pecora</taxon>
        <taxon>Bovidae</taxon>
        <taxon>Bovinae</taxon>
        <taxon>Bos</taxon>
    </lineage>
</organism>
<sequence length="957" mass="103089">MKKFFDSRREQGGSGLGSGSSGGGGSTSGLGSGYIGRVFGIGRQQVTVDEVLAEGGFAIVFLVRTSNGMKCALKRMFVNNEHDLQVCKREIQIMRDLSGHKNIVGYIDSSINSVSSGDVWEVLILMDFCRGGQVVNLMNQRLQTGFTENEVLQIFCDTCEAVARLHQCKTPIIHRDLKVENILLHDRGHYVLCDFGSATNKFQNPQTEGVNAVEDEIKKYTTLSYRAPEMVNLYSGKVITTKADIWALGCLLYKLCYFTLPFGESQVAICDGNFTIPDNSRYSQDMHCLIRYMLEPDPDKRPDIYQVSYFSFKLLKKECPIPNVQNSPIPTKLPEPVKASEAAAKKTQPKARLTDPIPTTETSIAPRQRPKAGQTQPNPGILPIQPALTPRKRATVQPPPQAAGSSNQPGLLASVPQPKTQPPPSQPLPQSQPKQPQAPPTSQQPPSAPAQALPTQAQATPQHQQQLFLKQQQQQQTAPPAQQPAGTFYQQPQQQAQAPQFQAVHPAAQQPVIAQFPVVSQGSSQQQLIQNFYQQQQQQQQLATALHQQQLLTQQAALQQKTTAAAAPQPQAQPAAAASPAPAQEPAQIQAPVRQQPKVQTTPPPTIQGQKLGSLTPPSSPKAQRAGHRRILSDVTHSAVFGVPASKSTQLLQAAAAEASLNKSKSATTTPSGSPRASQQNVYNPSEGSTWNPFDDDNFSKLTAEELLNKDFAKLGEGKYPEKLGGSAESLIPGFQPTQGDAFAASSFSAGTAEKRKGGQTMDSSLPLLSVSDPFIPLQVPDAPEKLIEGLKSPDTSLLLPDLLPMTDPFGSTSDAVIEKADVAVESLIPGLEPPVPQRLPSQTESVTSNRTDSLTGEDSLIDCSLLSNPTTDLLEEFAPIAISAPAHKAAEDSNLISGFDVPEGSDKVAEDEFDPIPVLITKNPQGGHSRNSSGSSESSLPNLARSLLLVDQLIDL</sequence>
<comment type="function">
    <text evidence="3">Regulates clathrin-mediated endocytosis by phosphorylating the AP2M1/mu2 subunit of the adaptor protein complex 2 (AP-2) which ensures high affinity binding of AP-2 to cargo membrane proteins during the initial stages of endocytosis. Preferentially, may phosphorylate substrates on threonine residues. Regulates phosphorylation of other AP-2 subunits as well as AP-2 localization and AP-2-mediated internalization of ligand complexes. Phosphorylates NUMB and regulates its cellular localization, promoting NUMB localization to endosomes. Binds to and stabilizes the activated form of NOTCH1, increases its localization in endosomes and regulates its transcriptional activity.</text>
</comment>
<comment type="catalytic activity">
    <reaction evidence="10">
        <text>L-seryl-[protein] + ATP = O-phospho-L-seryl-[protein] + ADP + H(+)</text>
        <dbReference type="Rhea" id="RHEA:17989"/>
        <dbReference type="Rhea" id="RHEA-COMP:9863"/>
        <dbReference type="Rhea" id="RHEA-COMP:11604"/>
        <dbReference type="ChEBI" id="CHEBI:15378"/>
        <dbReference type="ChEBI" id="CHEBI:29999"/>
        <dbReference type="ChEBI" id="CHEBI:30616"/>
        <dbReference type="ChEBI" id="CHEBI:83421"/>
        <dbReference type="ChEBI" id="CHEBI:456216"/>
        <dbReference type="EC" id="2.7.11.1"/>
    </reaction>
</comment>
<comment type="catalytic activity">
    <reaction evidence="3">
        <text>L-threonyl-[protein] + ATP = O-phospho-L-threonyl-[protein] + ADP + H(+)</text>
        <dbReference type="Rhea" id="RHEA:46608"/>
        <dbReference type="Rhea" id="RHEA-COMP:11060"/>
        <dbReference type="Rhea" id="RHEA-COMP:11605"/>
        <dbReference type="ChEBI" id="CHEBI:15378"/>
        <dbReference type="ChEBI" id="CHEBI:30013"/>
        <dbReference type="ChEBI" id="CHEBI:30616"/>
        <dbReference type="ChEBI" id="CHEBI:61977"/>
        <dbReference type="ChEBI" id="CHEBI:456216"/>
        <dbReference type="EC" id="2.7.11.1"/>
    </reaction>
</comment>
<comment type="activity regulation">
    <text evidence="3">Stimulated by clathrin.</text>
</comment>
<comment type="subunit">
    <text evidence="1 3">Interacts (via CBD domain) with clathrin (By similarity). Interacts with AP-2 complex (By similarity). Interacts with NUMB (By similarity). Interacts with alpha-adaptin (By similarity). Interacts with EPS15 isoform 2 (By similarity). Interacts with membrane-bound activated NOTCH1 but not with the inactive full-length form of NOTCH1 (By similarity). Preferentially interacts with monoubiquitinated activated NOTCH1 compared to the non-ubiquitinated form (By similarity).</text>
</comment>
<comment type="subcellular location">
    <subcellularLocation>
        <location evidence="8">Cell membrane</location>
        <topology evidence="8">Peripheral membrane protein</topology>
    </subcellularLocation>
    <subcellularLocation>
        <location evidence="1">Membrane</location>
        <location evidence="1">Clathrin-coated pit</location>
    </subcellularLocation>
    <subcellularLocation>
        <location evidence="1">Presynapse</location>
    </subcellularLocation>
    <text evidence="1">Active when found in clathrin-coated pits at the plasma membrane. In neuronal cells, enriched at presynaptic terminals. In non-neuronal cells, enriched at leading edge of migrating cells (By similarity).</text>
</comment>
<comment type="tissue specificity">
    <text evidence="8">Detected in brain (at protein level).</text>
</comment>
<comment type="PTM">
    <text evidence="3">Autophosphorylated.</text>
</comment>
<comment type="similarity">
    <text evidence="5">Belongs to the protein kinase superfamily. Ser/Thr protein kinase family.</text>
</comment>
<keyword id="KW-0007">Acetylation</keyword>
<keyword id="KW-0067">ATP-binding</keyword>
<keyword id="KW-1003">Cell membrane</keyword>
<keyword id="KW-0966">Cell projection</keyword>
<keyword id="KW-0168">Coated pit</keyword>
<keyword id="KW-0254">Endocytosis</keyword>
<keyword id="KW-0418">Kinase</keyword>
<keyword id="KW-0472">Membrane</keyword>
<keyword id="KW-0488">Methylation</keyword>
<keyword id="KW-0547">Nucleotide-binding</keyword>
<keyword id="KW-0597">Phosphoprotein</keyword>
<keyword id="KW-1185">Reference proteome</keyword>
<keyword id="KW-0723">Serine/threonine-protein kinase</keyword>
<keyword id="KW-0770">Synapse</keyword>
<keyword id="KW-0808">Transferase</keyword>
<protein>
    <recommendedName>
        <fullName evidence="9">AP2-associated protein kinase 1</fullName>
        <ecNumber evidence="3">2.7.11.1</ecNumber>
    </recommendedName>
    <alternativeName>
        <fullName evidence="9">Adaptor-associated kinase 1</fullName>
    </alternativeName>
</protein>
<reference key="1">
    <citation type="journal article" date="2009" name="Science">
        <title>The genome sequence of taurine cattle: a window to ruminant biology and evolution.</title>
        <authorList>
            <consortium name="The bovine genome sequencing and analysis consortium"/>
        </authorList>
    </citation>
    <scope>NUCLEOTIDE SEQUENCE [LARGE SCALE GENOMIC DNA]</scope>
    <source>
        <strain>Hereford</strain>
    </source>
</reference>
<reference evidence="10" key="2">
    <citation type="journal article" date="2002" name="J. Cell Biol.">
        <title>Identification of an adaptor-associated kinase, AAK1, as a regulator of clathrin-mediated endocytosis.</title>
        <authorList>
            <person name="Conner S.D."/>
            <person name="Schmid S.L."/>
        </authorList>
    </citation>
    <scope>SUBCELLULAR LOCATION</scope>
    <scope>TISSUE SPECIFICITY</scope>
</reference>